<dbReference type="EC" id="1.3.7.2" evidence="1"/>
<dbReference type="EMBL" id="CP000554">
    <property type="protein sequence ID" value="ABM78978.1"/>
    <property type="molecule type" value="Genomic_DNA"/>
</dbReference>
<dbReference type="RefSeq" id="WP_011826846.1">
    <property type="nucleotide sequence ID" value="NC_008820.1"/>
</dbReference>
<dbReference type="SMR" id="A2CBW8"/>
<dbReference type="STRING" id="59922.P9303_22431"/>
<dbReference type="KEGG" id="pmf:P9303_22431"/>
<dbReference type="HOGENOM" id="CLU_086208_0_0_3"/>
<dbReference type="BioCyc" id="PMAR59922:G1G80-1963-MONOMER"/>
<dbReference type="Proteomes" id="UP000002274">
    <property type="component" value="Chromosome"/>
</dbReference>
<dbReference type="GO" id="GO:0050617">
    <property type="term" value="F:15,16-dihydrobiliverdin:ferredoxin oxidoreductase activity"/>
    <property type="evidence" value="ECO:0007669"/>
    <property type="project" value="UniProtKB-UniRule"/>
</dbReference>
<dbReference type="GO" id="GO:0050897">
    <property type="term" value="F:cobalt ion binding"/>
    <property type="evidence" value="ECO:0007669"/>
    <property type="project" value="InterPro"/>
</dbReference>
<dbReference type="GO" id="GO:0010024">
    <property type="term" value="P:phytochromobilin biosynthetic process"/>
    <property type="evidence" value="ECO:0007669"/>
    <property type="project" value="InterPro"/>
</dbReference>
<dbReference type="Gene3D" id="3.40.1500.20">
    <property type="match status" value="1"/>
</dbReference>
<dbReference type="HAMAP" id="MF_00792">
    <property type="entry name" value="PebA"/>
    <property type="match status" value="1"/>
</dbReference>
<dbReference type="InterPro" id="IPR023658">
    <property type="entry name" value="DiHydbiliverdin_OxRdtase"/>
</dbReference>
<dbReference type="InterPro" id="IPR009249">
    <property type="entry name" value="Ferredoxin-dep_bilin_Rdtase"/>
</dbReference>
<dbReference type="NCBIfam" id="NF009720">
    <property type="entry name" value="PRK13247.1"/>
    <property type="match status" value="1"/>
</dbReference>
<dbReference type="PANTHER" id="PTHR34557">
    <property type="entry name" value="PHYTOCHROMOBILIN:FERREDOXIN OXIDOREDUCTASE, CHLOROPLASTIC"/>
    <property type="match status" value="1"/>
</dbReference>
<dbReference type="PANTHER" id="PTHR34557:SF1">
    <property type="entry name" value="PHYTOCHROMOBILIN:FERREDOXIN OXIDOREDUCTASE, CHLOROPLASTIC"/>
    <property type="match status" value="1"/>
</dbReference>
<dbReference type="Pfam" id="PF05996">
    <property type="entry name" value="Fe_bilin_red"/>
    <property type="match status" value="1"/>
</dbReference>
<reference key="1">
    <citation type="journal article" date="2007" name="PLoS Genet.">
        <title>Patterns and implications of gene gain and loss in the evolution of Prochlorococcus.</title>
        <authorList>
            <person name="Kettler G.C."/>
            <person name="Martiny A.C."/>
            <person name="Huang K."/>
            <person name="Zucker J."/>
            <person name="Coleman M.L."/>
            <person name="Rodrigue S."/>
            <person name="Chen F."/>
            <person name="Lapidus A."/>
            <person name="Ferriera S."/>
            <person name="Johnson J."/>
            <person name="Steglich C."/>
            <person name="Church G.M."/>
            <person name="Richardson P."/>
            <person name="Chisholm S.W."/>
        </authorList>
    </citation>
    <scope>NUCLEOTIDE SEQUENCE [LARGE SCALE GENOMIC DNA]</scope>
    <source>
        <strain>MIT 9303</strain>
    </source>
</reference>
<evidence type="ECO:0000255" key="1">
    <source>
        <dbReference type="HAMAP-Rule" id="MF_00792"/>
    </source>
</evidence>
<feature type="chain" id="PRO_1000046919" description="15,16-dihydrobiliverdin:ferredoxin oxidoreductase">
    <location>
        <begin position="1"/>
        <end position="249"/>
    </location>
</feature>
<name>PEBA_PROM3</name>
<accession>A2CBW8</accession>
<comment type="function">
    <text evidence="1">Catalyzes the two-electron reduction of biliverdin IX-alpha at the C15 methine bridge.</text>
</comment>
<comment type="catalytic activity">
    <reaction evidence="1">
        <text>15,16-dihydrobiliverdin + oxidized 2[4Fe-4S]-[ferredoxin] = biliverdin IXalpha + reduced 2[4Fe-4S]-[ferredoxin] + 2 H(+)</text>
        <dbReference type="Rhea" id="RHEA:10168"/>
        <dbReference type="Rhea" id="RHEA-COMP:10002"/>
        <dbReference type="Rhea" id="RHEA-COMP:10004"/>
        <dbReference type="ChEBI" id="CHEBI:15378"/>
        <dbReference type="ChEBI" id="CHEBI:33722"/>
        <dbReference type="ChEBI" id="CHEBI:33723"/>
        <dbReference type="ChEBI" id="CHEBI:57899"/>
        <dbReference type="ChEBI" id="CHEBI:57991"/>
        <dbReference type="EC" id="1.3.7.2"/>
    </reaction>
</comment>
<comment type="similarity">
    <text evidence="1">Belongs to the HY2 family.</text>
</comment>
<keyword id="KW-0560">Oxidoreductase</keyword>
<protein>
    <recommendedName>
        <fullName evidence="1">15,16-dihydrobiliverdin:ferredoxin oxidoreductase</fullName>
        <ecNumber evidence="1">1.3.7.2</ecNumber>
    </recommendedName>
</protein>
<sequence>MFDPLLEKLHSSIRIQGGETAAVPDGLRECRNEKKNSLIRSWLWQVPGFRRWRVSRLDAGESLQVLNSVAYPNYNIDQPLMGLDLLWFGKRQKLVAILDFQPLIQDHSYLERHFQGLKALQNRFPELSGEETMRLFDPNQYFSPWLLFCRGGAEKATNSLPEAFNAFLHCYWELHQQNSKKASLIPAAEVKQLQIAYDIYSAERDPAHGLFTSHFGKAWSDRFLHEFLFPASTKADSSPPADADYDLPR</sequence>
<gene>
    <name evidence="1" type="primary">pebA</name>
    <name type="ordered locus">P9303_22431</name>
</gene>
<proteinExistence type="inferred from homology"/>
<organism>
    <name type="scientific">Prochlorococcus marinus (strain MIT 9303)</name>
    <dbReference type="NCBI Taxonomy" id="59922"/>
    <lineage>
        <taxon>Bacteria</taxon>
        <taxon>Bacillati</taxon>
        <taxon>Cyanobacteriota</taxon>
        <taxon>Cyanophyceae</taxon>
        <taxon>Synechococcales</taxon>
        <taxon>Prochlorococcaceae</taxon>
        <taxon>Prochlorococcus</taxon>
    </lineage>
</organism>